<gene>
    <name evidence="1" type="primary">rplK</name>
    <name type="ordered locus">MCA1062</name>
</gene>
<protein>
    <recommendedName>
        <fullName evidence="1">Large ribosomal subunit protein uL11</fullName>
    </recommendedName>
    <alternativeName>
        <fullName evidence="2">50S ribosomal protein L11</fullName>
    </alternativeName>
</protein>
<keyword id="KW-0488">Methylation</keyword>
<keyword id="KW-1185">Reference proteome</keyword>
<keyword id="KW-0687">Ribonucleoprotein</keyword>
<keyword id="KW-0689">Ribosomal protein</keyword>
<keyword id="KW-0694">RNA-binding</keyword>
<keyword id="KW-0699">rRNA-binding</keyword>
<name>RL11_METCA</name>
<comment type="function">
    <text evidence="1">Forms part of the ribosomal stalk which helps the ribosome interact with GTP-bound translation factors.</text>
</comment>
<comment type="subunit">
    <text evidence="1">Part of the ribosomal stalk of the 50S ribosomal subunit. Interacts with L10 and the large rRNA to form the base of the stalk. L10 forms an elongated spine to which L12 dimers bind in a sequential fashion forming a multimeric L10(L12)X complex.</text>
</comment>
<comment type="PTM">
    <text evidence="1">One or more lysine residues are methylated.</text>
</comment>
<comment type="similarity">
    <text evidence="1">Belongs to the universal ribosomal protein uL11 family.</text>
</comment>
<accession>Q60A10</accession>
<proteinExistence type="inferred from homology"/>
<feature type="chain" id="PRO_0000104314" description="Large ribosomal subunit protein uL11">
    <location>
        <begin position="1"/>
        <end position="143"/>
    </location>
</feature>
<evidence type="ECO:0000255" key="1">
    <source>
        <dbReference type="HAMAP-Rule" id="MF_00736"/>
    </source>
</evidence>
<evidence type="ECO:0000305" key="2"/>
<organism>
    <name type="scientific">Methylococcus capsulatus (strain ATCC 33009 / NCIMB 11132 / Bath)</name>
    <dbReference type="NCBI Taxonomy" id="243233"/>
    <lineage>
        <taxon>Bacteria</taxon>
        <taxon>Pseudomonadati</taxon>
        <taxon>Pseudomonadota</taxon>
        <taxon>Gammaproteobacteria</taxon>
        <taxon>Methylococcales</taxon>
        <taxon>Methylococcaceae</taxon>
        <taxon>Methylococcus</taxon>
    </lineage>
</organism>
<reference key="1">
    <citation type="journal article" date="2004" name="PLoS Biol.">
        <title>Genomic insights into methanotrophy: the complete genome sequence of Methylococcus capsulatus (Bath).</title>
        <authorList>
            <person name="Ward N.L."/>
            <person name="Larsen O."/>
            <person name="Sakwa J."/>
            <person name="Bruseth L."/>
            <person name="Khouri H.M."/>
            <person name="Durkin A.S."/>
            <person name="Dimitrov G."/>
            <person name="Jiang L."/>
            <person name="Scanlan D."/>
            <person name="Kang K.H."/>
            <person name="Lewis M.R."/>
            <person name="Nelson K.E."/>
            <person name="Methe B.A."/>
            <person name="Wu M."/>
            <person name="Heidelberg J.F."/>
            <person name="Paulsen I.T."/>
            <person name="Fouts D.E."/>
            <person name="Ravel J."/>
            <person name="Tettelin H."/>
            <person name="Ren Q."/>
            <person name="Read T.D."/>
            <person name="DeBoy R.T."/>
            <person name="Seshadri R."/>
            <person name="Salzberg S.L."/>
            <person name="Jensen H.B."/>
            <person name="Birkeland N.K."/>
            <person name="Nelson W.C."/>
            <person name="Dodson R.J."/>
            <person name="Grindhaug S.H."/>
            <person name="Holt I.E."/>
            <person name="Eidhammer I."/>
            <person name="Jonasen I."/>
            <person name="Vanaken S."/>
            <person name="Utterback T.R."/>
            <person name="Feldblyum T.V."/>
            <person name="Fraser C.M."/>
            <person name="Lillehaug J.R."/>
            <person name="Eisen J.A."/>
        </authorList>
    </citation>
    <scope>NUCLEOTIDE SEQUENCE [LARGE SCALE GENOMIC DNA]</scope>
    <source>
        <strain>ATCC 33009 / NCIMB 11132 / Bath</strain>
    </source>
</reference>
<dbReference type="EMBL" id="AE017282">
    <property type="protein sequence ID" value="AAU92680.1"/>
    <property type="molecule type" value="Genomic_DNA"/>
</dbReference>
<dbReference type="RefSeq" id="WP_010960362.1">
    <property type="nucleotide sequence ID" value="NC_002977.6"/>
</dbReference>
<dbReference type="SMR" id="Q60A10"/>
<dbReference type="STRING" id="243233.MCA1062"/>
<dbReference type="GeneID" id="88223359"/>
<dbReference type="KEGG" id="mca:MCA1062"/>
<dbReference type="eggNOG" id="COG0080">
    <property type="taxonomic scope" value="Bacteria"/>
</dbReference>
<dbReference type="HOGENOM" id="CLU_074237_2_0_6"/>
<dbReference type="Proteomes" id="UP000006821">
    <property type="component" value="Chromosome"/>
</dbReference>
<dbReference type="GO" id="GO:0022625">
    <property type="term" value="C:cytosolic large ribosomal subunit"/>
    <property type="evidence" value="ECO:0007669"/>
    <property type="project" value="TreeGrafter"/>
</dbReference>
<dbReference type="GO" id="GO:0070180">
    <property type="term" value="F:large ribosomal subunit rRNA binding"/>
    <property type="evidence" value="ECO:0007669"/>
    <property type="project" value="UniProtKB-UniRule"/>
</dbReference>
<dbReference type="GO" id="GO:0003735">
    <property type="term" value="F:structural constituent of ribosome"/>
    <property type="evidence" value="ECO:0007669"/>
    <property type="project" value="InterPro"/>
</dbReference>
<dbReference type="GO" id="GO:0006412">
    <property type="term" value="P:translation"/>
    <property type="evidence" value="ECO:0007669"/>
    <property type="project" value="UniProtKB-UniRule"/>
</dbReference>
<dbReference type="CDD" id="cd00349">
    <property type="entry name" value="Ribosomal_L11"/>
    <property type="match status" value="1"/>
</dbReference>
<dbReference type="FunFam" id="1.10.10.250:FF:000001">
    <property type="entry name" value="50S ribosomal protein L11"/>
    <property type="match status" value="1"/>
</dbReference>
<dbReference type="FunFam" id="3.30.1550.10:FF:000013">
    <property type="entry name" value="50S ribosomal protein L11"/>
    <property type="match status" value="1"/>
</dbReference>
<dbReference type="Gene3D" id="1.10.10.250">
    <property type="entry name" value="Ribosomal protein L11, C-terminal domain"/>
    <property type="match status" value="1"/>
</dbReference>
<dbReference type="Gene3D" id="3.30.1550.10">
    <property type="entry name" value="Ribosomal protein L11/L12, N-terminal domain"/>
    <property type="match status" value="1"/>
</dbReference>
<dbReference type="HAMAP" id="MF_00736">
    <property type="entry name" value="Ribosomal_uL11"/>
    <property type="match status" value="1"/>
</dbReference>
<dbReference type="InterPro" id="IPR000911">
    <property type="entry name" value="Ribosomal_uL11"/>
</dbReference>
<dbReference type="InterPro" id="IPR006519">
    <property type="entry name" value="Ribosomal_uL11_bac-typ"/>
</dbReference>
<dbReference type="InterPro" id="IPR020783">
    <property type="entry name" value="Ribosomal_uL11_C"/>
</dbReference>
<dbReference type="InterPro" id="IPR036769">
    <property type="entry name" value="Ribosomal_uL11_C_sf"/>
</dbReference>
<dbReference type="InterPro" id="IPR020785">
    <property type="entry name" value="Ribosomal_uL11_CS"/>
</dbReference>
<dbReference type="InterPro" id="IPR020784">
    <property type="entry name" value="Ribosomal_uL11_N"/>
</dbReference>
<dbReference type="InterPro" id="IPR036796">
    <property type="entry name" value="Ribosomal_uL11_N_sf"/>
</dbReference>
<dbReference type="NCBIfam" id="TIGR01632">
    <property type="entry name" value="L11_bact"/>
    <property type="match status" value="1"/>
</dbReference>
<dbReference type="PANTHER" id="PTHR11661">
    <property type="entry name" value="60S RIBOSOMAL PROTEIN L12"/>
    <property type="match status" value="1"/>
</dbReference>
<dbReference type="PANTHER" id="PTHR11661:SF1">
    <property type="entry name" value="LARGE RIBOSOMAL SUBUNIT PROTEIN UL11M"/>
    <property type="match status" value="1"/>
</dbReference>
<dbReference type="Pfam" id="PF00298">
    <property type="entry name" value="Ribosomal_L11"/>
    <property type="match status" value="1"/>
</dbReference>
<dbReference type="Pfam" id="PF03946">
    <property type="entry name" value="Ribosomal_L11_N"/>
    <property type="match status" value="1"/>
</dbReference>
<dbReference type="SMART" id="SM00649">
    <property type="entry name" value="RL11"/>
    <property type="match status" value="1"/>
</dbReference>
<dbReference type="SUPFAM" id="SSF54747">
    <property type="entry name" value="Ribosomal L11/L12e N-terminal domain"/>
    <property type="match status" value="1"/>
</dbReference>
<dbReference type="SUPFAM" id="SSF46906">
    <property type="entry name" value="Ribosomal protein L11, C-terminal domain"/>
    <property type="match status" value="1"/>
</dbReference>
<dbReference type="PROSITE" id="PS00359">
    <property type="entry name" value="RIBOSOMAL_L11"/>
    <property type="match status" value="1"/>
</dbReference>
<sequence>MAKKITGYIKLQVKAGEANPSPPVGPALGQRGVNIMEFCKAFNAQTQNVEKGLPLPVVITVYADRSFTFITKTPPASVLLKKALGLKSGSSKPNTDKVGTVTRAQLEEIAKMKMPDLTAADMDAAVRTIAGSATSMGLIVEGV</sequence>